<name>PG052_VAR67</name>
<protein>
    <recommendedName>
        <fullName>Protein OPG052</fullName>
    </recommendedName>
    <alternativeName>
        <fullName>Protein F8</fullName>
    </alternativeName>
</protein>
<evidence type="ECO:0000250" key="1">
    <source>
        <dbReference type="UniProtKB" id="P24360"/>
    </source>
</evidence>
<evidence type="ECO:0000256" key="2">
    <source>
        <dbReference type="SAM" id="MobiDB-lite"/>
    </source>
</evidence>
<evidence type="ECO:0000305" key="3"/>
<proteinExistence type="inferred from homology"/>
<organismHost>
    <name type="scientific">Homo sapiens</name>
    <name type="common">Human</name>
    <dbReference type="NCBI Taxonomy" id="9606"/>
</organismHost>
<sequence>MEGSKRKHESRRPQQEQEQHRPRTPPSYEEIAKYGHSFNVKRFTNEEMCLKNDYPRIISYNPPPK</sequence>
<organism>
    <name type="scientific">Variola virus (isolate Human/India/Ind3/1967)</name>
    <name type="common">VARV</name>
    <name type="synonym">Smallpox virus</name>
    <dbReference type="NCBI Taxonomy" id="587200"/>
    <lineage>
        <taxon>Viruses</taxon>
        <taxon>Varidnaviria</taxon>
        <taxon>Bamfordvirae</taxon>
        <taxon>Nucleocytoviricota</taxon>
        <taxon>Pokkesviricetes</taxon>
        <taxon>Chitovirales</taxon>
        <taxon>Poxviridae</taxon>
        <taxon>Chordopoxvirinae</taxon>
        <taxon>Orthopoxvirus</taxon>
        <taxon>Variola virus</taxon>
    </lineage>
</organism>
<dbReference type="EMBL" id="X69198">
    <property type="protein sequence ID" value="CAA48973.1"/>
    <property type="molecule type" value="Genomic_DNA"/>
</dbReference>
<dbReference type="EMBL" id="U18340">
    <property type="protein sequence ID" value="AAA69443.1"/>
    <property type="molecule type" value="Genomic_DNA"/>
</dbReference>
<dbReference type="EMBL" id="U18337">
    <property type="protein sequence ID" value="AAA69337.1"/>
    <property type="molecule type" value="Genomic_DNA"/>
</dbReference>
<dbReference type="EMBL" id="U18338">
    <property type="protein sequence ID" value="AAA69378.1"/>
    <property type="molecule type" value="Genomic_DNA"/>
</dbReference>
<dbReference type="PIR" id="C36840">
    <property type="entry name" value="C36840"/>
</dbReference>
<dbReference type="PIR" id="F72154">
    <property type="entry name" value="F72154"/>
</dbReference>
<dbReference type="RefSeq" id="NP_042076.1">
    <property type="nucleotide sequence ID" value="NC_001611.1"/>
</dbReference>
<dbReference type="GeneID" id="1486568"/>
<dbReference type="KEGG" id="vg:1486568"/>
<dbReference type="Proteomes" id="UP000002060">
    <property type="component" value="Segment"/>
</dbReference>
<dbReference type="InterPro" id="IPR008726">
    <property type="entry name" value="Poxvirus_F8"/>
</dbReference>
<dbReference type="Pfam" id="PF05886">
    <property type="entry name" value="Orthopox_F8"/>
    <property type="match status" value="1"/>
</dbReference>
<keyword id="KW-0244">Early protein</keyword>
<keyword id="KW-1185">Reference proteome</keyword>
<comment type="induction">
    <text evidence="1">Expressed in the early phase of the viral replicative cycle.</text>
</comment>
<comment type="similarity">
    <text evidence="3">Belongs to the orthopoxvirus OPG052 family.</text>
</comment>
<feature type="chain" id="PRO_0000099490" description="Protein OPG052">
    <location>
        <begin position="1"/>
        <end position="65"/>
    </location>
</feature>
<feature type="region of interest" description="Disordered" evidence="2">
    <location>
        <begin position="1"/>
        <end position="29"/>
    </location>
</feature>
<feature type="compositionally biased region" description="Basic residues" evidence="2">
    <location>
        <begin position="1"/>
        <end position="10"/>
    </location>
</feature>
<feature type="compositionally biased region" description="Basic and acidic residues" evidence="2">
    <location>
        <begin position="11"/>
        <end position="21"/>
    </location>
</feature>
<reference key="1">
    <citation type="journal article" date="1993" name="Virus Res.">
        <title>Analysis of the nucleotide sequence of a 43 kbp segment of the genome of variola virus India-1967 strain.</title>
        <authorList>
            <person name="Shchelkunov S.N."/>
            <person name="Blinov V.M."/>
            <person name="Resenchuk S.M."/>
            <person name="Totmenin A.V."/>
            <person name="Sandakhchiev L.S."/>
        </authorList>
    </citation>
    <scope>NUCLEOTIDE SEQUENCE [GENOMIC DNA]</scope>
    <source>
        <strain>India-1967 / Isolate Ind3</strain>
    </source>
</reference>
<reference key="2">
    <citation type="journal article" date="1993" name="FEBS Lett.">
        <title>Genes of variola and vaccinia viruses necessary to overcome the host protective mechanisms.</title>
        <authorList>
            <person name="Shchelkunov S.N."/>
            <person name="Blinov V.M."/>
            <person name="Sandakhchiev L.S."/>
        </authorList>
    </citation>
    <scope>NUCLEOTIDE SEQUENCE [GENOMIC DNA]</scope>
    <source>
        <strain>India-1967 / Isolate Ind3</strain>
    </source>
</reference>
<reference key="3">
    <citation type="submission" date="1994-12" db="EMBL/GenBank/DDBJ databases">
        <authorList>
            <person name="Massung R.F."/>
            <person name="Loparev V.N."/>
            <person name="Knight J.C."/>
            <person name="Chizhikov V.E."/>
            <person name="Parsons J.M."/>
            <person name="Totmenin A.V."/>
            <person name="Shchelkunov S.N."/>
            <person name="Esposito J.J."/>
        </authorList>
    </citation>
    <scope>NUCLEOTIDE SEQUENCE [GENOMIC DNA]</scope>
    <source>
        <strain>Congo-1965</strain>
        <strain>Garcia-1966</strain>
        <strain>Somalia-1977</strain>
    </source>
</reference>
<gene>
    <name type="primary">OPG052</name>
    <name type="ORF">C12L</name>
    <name type="ORF">F8L</name>
</gene>
<accession>P33868</accession>